<name>YQID_ECOLI</name>
<comment type="subcellular location">
    <subcellularLocation>
        <location evidence="4">Cell inner membrane</location>
        <topology evidence="1">Single-pass membrane protein</topology>
    </subcellularLocation>
</comment>
<comment type="induction">
    <text evidence="2">Expressed approximately equally in exponential and stationary phases (at protein level).</text>
</comment>
<sequence>MFIAWYWIVLIALVVVGYFLHLKRYCRAFRQDRDALLEARNKYLNSTREETAEKVE</sequence>
<feature type="chain" id="PRO_0000445185" description="Protein YqiD">
    <location>
        <begin position="1"/>
        <end position="56"/>
    </location>
</feature>
<feature type="transmembrane region" description="Helical" evidence="1">
    <location>
        <begin position="2"/>
        <end position="22"/>
    </location>
</feature>
<proteinExistence type="evidence at protein level"/>
<organism>
    <name type="scientific">Escherichia coli (strain K12)</name>
    <dbReference type="NCBI Taxonomy" id="83333"/>
    <lineage>
        <taxon>Bacteria</taxon>
        <taxon>Pseudomonadati</taxon>
        <taxon>Pseudomonadota</taxon>
        <taxon>Gammaproteobacteria</taxon>
        <taxon>Enterobacterales</taxon>
        <taxon>Enterobacteriaceae</taxon>
        <taxon>Escherichia</taxon>
    </lineage>
</organism>
<reference key="1">
    <citation type="journal article" date="1997" name="Science">
        <title>The complete genome sequence of Escherichia coli K-12.</title>
        <authorList>
            <person name="Blattner F.R."/>
            <person name="Plunkett G. III"/>
            <person name="Bloch C.A."/>
            <person name="Perna N.T."/>
            <person name="Burland V."/>
            <person name="Riley M."/>
            <person name="Collado-Vides J."/>
            <person name="Glasner J.D."/>
            <person name="Rode C.K."/>
            <person name="Mayhew G.F."/>
            <person name="Gregor J."/>
            <person name="Davis N.W."/>
            <person name="Kirkpatrick H.A."/>
            <person name="Goeden M.A."/>
            <person name="Rose D.J."/>
            <person name="Mau B."/>
            <person name="Shao Y."/>
        </authorList>
    </citation>
    <scope>NUCLEOTIDE SEQUENCE [LARGE SCALE GENOMIC DNA]</scope>
    <source>
        <strain>K12 / MG1655 / ATCC 47076</strain>
    </source>
</reference>
<reference key="2">
    <citation type="journal article" date="2018" name="Proteomics">
        <title>Identifying new small proteins in Escherichia coli.</title>
        <authorList>
            <person name="VanOrsdel C.E."/>
            <person name="Kelly J.P."/>
            <person name="Burke B.N."/>
            <person name="Lein C.D."/>
            <person name="Oufiero C.E."/>
            <person name="Sanchez J.F."/>
            <person name="Wimmers L.E."/>
            <person name="Hearn D.J."/>
            <person name="Abuikhdair F.J."/>
            <person name="Barnhart K.R."/>
            <person name="Duley M.L."/>
            <person name="Ernst S.E.G."/>
            <person name="Kenerson B.A."/>
            <person name="Serafin A.J."/>
            <person name="Hemm M.R."/>
        </authorList>
    </citation>
    <scope>IDENTIFICATION</scope>
    <scope>INDUCTION</scope>
</reference>
<protein>
    <recommendedName>
        <fullName evidence="3">Protein YqiD</fullName>
    </recommendedName>
</protein>
<accession>P0DPP7</accession>
<accession>A0A385XJQ1</accession>
<evidence type="ECO:0000255" key="1"/>
<evidence type="ECO:0000269" key="2">
    <source>
    </source>
</evidence>
<evidence type="ECO:0000303" key="3">
    <source>
    </source>
</evidence>
<evidence type="ECO:0000305" key="4"/>
<gene>
    <name evidence="3" type="primary">yqiD</name>
    <name type="ordered locus">b4756</name>
</gene>
<keyword id="KW-0997">Cell inner membrane</keyword>
<keyword id="KW-1003">Cell membrane</keyword>
<keyword id="KW-0472">Membrane</keyword>
<keyword id="KW-1185">Reference proteome</keyword>
<keyword id="KW-0812">Transmembrane</keyword>
<keyword id="KW-1133">Transmembrane helix</keyword>
<dbReference type="EMBL" id="U00096">
    <property type="protein sequence ID" value="AYC08246.1"/>
    <property type="molecule type" value="Genomic_DNA"/>
</dbReference>
<dbReference type="RefSeq" id="WP_000469266.1">
    <property type="nucleotide sequence ID" value="NZ_STEB01000001.1"/>
</dbReference>
<dbReference type="SMR" id="P0DPP7"/>
<dbReference type="EnsemblBacteria" id="AYC08246">
    <property type="protein sequence ID" value="AYC08246"/>
    <property type="gene ID" value="b4756"/>
</dbReference>
<dbReference type="GeneID" id="93779477"/>
<dbReference type="KEGG" id="ecoc:C3026_16605"/>
<dbReference type="InParanoid" id="P0DPP7"/>
<dbReference type="OrthoDB" id="6629128at2"/>
<dbReference type="BioCyc" id="EcoCyc:MONOMER0-4434"/>
<dbReference type="PRO" id="PR:P0DPP7"/>
<dbReference type="Proteomes" id="UP000000625">
    <property type="component" value="Chromosome"/>
</dbReference>
<dbReference type="GO" id="GO:0005886">
    <property type="term" value="C:plasma membrane"/>
    <property type="evidence" value="ECO:0007669"/>
    <property type="project" value="UniProtKB-SubCell"/>
</dbReference>
<dbReference type="AntiFam" id="ANF00071">
    <property type="entry name" value="Translation of intergenic region"/>
</dbReference>